<feature type="chain" id="PRO_1000132806" description="ATP-dependent Clp protease adapter protein ClpS">
    <location>
        <begin position="1"/>
        <end position="111"/>
    </location>
</feature>
<keyword id="KW-1185">Reference proteome</keyword>
<dbReference type="EMBL" id="CP001601">
    <property type="protein sequence ID" value="ACP33695.1"/>
    <property type="molecule type" value="Genomic_DNA"/>
</dbReference>
<dbReference type="RefSeq" id="WP_012715272.1">
    <property type="nucleotide sequence ID" value="NZ_ACLH01000097.1"/>
</dbReference>
<dbReference type="SMR" id="C3PIP1"/>
<dbReference type="STRING" id="548476.cauri_2102"/>
<dbReference type="GeneID" id="31924749"/>
<dbReference type="KEGG" id="car:cauri_2102"/>
<dbReference type="eggNOG" id="COG2127">
    <property type="taxonomic scope" value="Bacteria"/>
</dbReference>
<dbReference type="HOGENOM" id="CLU_153743_0_0_11"/>
<dbReference type="Proteomes" id="UP000002077">
    <property type="component" value="Chromosome"/>
</dbReference>
<dbReference type="GO" id="GO:0030163">
    <property type="term" value="P:protein catabolic process"/>
    <property type="evidence" value="ECO:0007669"/>
    <property type="project" value="InterPro"/>
</dbReference>
<dbReference type="GO" id="GO:0006508">
    <property type="term" value="P:proteolysis"/>
    <property type="evidence" value="ECO:0007669"/>
    <property type="project" value="UniProtKB-UniRule"/>
</dbReference>
<dbReference type="Gene3D" id="3.30.1390.10">
    <property type="match status" value="1"/>
</dbReference>
<dbReference type="HAMAP" id="MF_00302">
    <property type="entry name" value="ClpS"/>
    <property type="match status" value="1"/>
</dbReference>
<dbReference type="InterPro" id="IPR022935">
    <property type="entry name" value="ClpS"/>
</dbReference>
<dbReference type="InterPro" id="IPR003769">
    <property type="entry name" value="ClpS_core"/>
</dbReference>
<dbReference type="InterPro" id="IPR014719">
    <property type="entry name" value="Ribosomal_bL12_C/ClpS-like"/>
</dbReference>
<dbReference type="NCBIfam" id="NF000668">
    <property type="entry name" value="PRK00033.1-1"/>
    <property type="match status" value="1"/>
</dbReference>
<dbReference type="Pfam" id="PF02617">
    <property type="entry name" value="ClpS"/>
    <property type="match status" value="1"/>
</dbReference>
<dbReference type="SUPFAM" id="SSF54736">
    <property type="entry name" value="ClpS-like"/>
    <property type="match status" value="1"/>
</dbReference>
<comment type="function">
    <text evidence="1">Involved in the modulation of the specificity of the ClpAP-mediated ATP-dependent protein degradation.</text>
</comment>
<comment type="subunit">
    <text evidence="1">Binds to the N-terminal domain of the chaperone ClpA.</text>
</comment>
<comment type="similarity">
    <text evidence="1">Belongs to the ClpS family.</text>
</comment>
<protein>
    <recommendedName>
        <fullName evidence="1">ATP-dependent Clp protease adapter protein ClpS</fullName>
    </recommendedName>
</protein>
<accession>C3PIP1</accession>
<sequence length="111" mass="12222">MKAHKETSAGVVMSSPMATPELDEAIEVDVATSENLPWMCIVWDDPVNLMSYVSYVFQTVLGYDKKRANELMMQVHTEGKAAVSSGERDKVEADVKKLQVAGLWATMQQAG</sequence>
<evidence type="ECO:0000255" key="1">
    <source>
        <dbReference type="HAMAP-Rule" id="MF_00302"/>
    </source>
</evidence>
<organism>
    <name type="scientific">Corynebacterium aurimucosum (strain ATCC 700975 / DSM 44827 / CIP 107346 / CN-1)</name>
    <name type="common">Corynebacterium nigricans</name>
    <dbReference type="NCBI Taxonomy" id="548476"/>
    <lineage>
        <taxon>Bacteria</taxon>
        <taxon>Bacillati</taxon>
        <taxon>Actinomycetota</taxon>
        <taxon>Actinomycetes</taxon>
        <taxon>Mycobacteriales</taxon>
        <taxon>Corynebacteriaceae</taxon>
        <taxon>Corynebacterium</taxon>
    </lineage>
</organism>
<reference key="1">
    <citation type="journal article" date="2010" name="BMC Genomics">
        <title>Complete genome sequence and lifestyle of black-pigmented Corynebacterium aurimucosum ATCC 700975 (formerly C. nigricans CN-1) isolated from a vaginal swab of a woman with spontaneous abortion.</title>
        <authorList>
            <person name="Trost E."/>
            <person name="Gotker S."/>
            <person name="Schneider J."/>
            <person name="Schneiker-Bekel S."/>
            <person name="Szczepanowski R."/>
            <person name="Tilker A."/>
            <person name="Viehoever P."/>
            <person name="Arnold W."/>
            <person name="Bekel T."/>
            <person name="Blom J."/>
            <person name="Gartemann K.H."/>
            <person name="Linke B."/>
            <person name="Goesmann A."/>
            <person name="Puhler A."/>
            <person name="Shukla S.K."/>
            <person name="Tauch A."/>
        </authorList>
    </citation>
    <scope>NUCLEOTIDE SEQUENCE [LARGE SCALE GENOMIC DNA]</scope>
    <source>
        <strain>ATCC 700975 / DSM 44827 / CIP 107346 / CN-1</strain>
    </source>
</reference>
<proteinExistence type="inferred from homology"/>
<name>CLPS_CORA7</name>
<gene>
    <name evidence="1" type="primary">clpS</name>
    <name type="ordered locus">cauri_2102</name>
</gene>